<accession>Q9RL78</accession>
<organism>
    <name type="scientific">Staphylococcus aureus (strain COL)</name>
    <dbReference type="NCBI Taxonomy" id="93062"/>
    <lineage>
        <taxon>Bacteria</taxon>
        <taxon>Bacillati</taxon>
        <taxon>Bacillota</taxon>
        <taxon>Bacilli</taxon>
        <taxon>Bacillales</taxon>
        <taxon>Staphylococcaceae</taxon>
        <taxon>Staphylococcus</taxon>
    </lineage>
</organism>
<gene>
    <name evidence="1" type="primary">trpC</name>
    <name type="ordered locus">SACOL1406</name>
</gene>
<protein>
    <recommendedName>
        <fullName evidence="1">Indole-3-glycerol phosphate synthase</fullName>
        <shortName evidence="1">IGPS</shortName>
        <ecNumber evidence="1">4.1.1.48</ecNumber>
    </recommendedName>
</protein>
<evidence type="ECO:0000255" key="1">
    <source>
        <dbReference type="HAMAP-Rule" id="MF_00134"/>
    </source>
</evidence>
<keyword id="KW-0028">Amino-acid biosynthesis</keyword>
<keyword id="KW-0057">Aromatic amino acid biosynthesis</keyword>
<keyword id="KW-0210">Decarboxylase</keyword>
<keyword id="KW-0456">Lyase</keyword>
<keyword id="KW-0822">Tryptophan biosynthesis</keyword>
<comment type="catalytic activity">
    <reaction evidence="1">
        <text>1-(2-carboxyphenylamino)-1-deoxy-D-ribulose 5-phosphate + H(+) = (1S,2R)-1-C-(indol-3-yl)glycerol 3-phosphate + CO2 + H2O</text>
        <dbReference type="Rhea" id="RHEA:23476"/>
        <dbReference type="ChEBI" id="CHEBI:15377"/>
        <dbReference type="ChEBI" id="CHEBI:15378"/>
        <dbReference type="ChEBI" id="CHEBI:16526"/>
        <dbReference type="ChEBI" id="CHEBI:58613"/>
        <dbReference type="ChEBI" id="CHEBI:58866"/>
        <dbReference type="EC" id="4.1.1.48"/>
    </reaction>
</comment>
<comment type="pathway">
    <text evidence="1">Amino-acid biosynthesis; L-tryptophan biosynthesis; L-tryptophan from chorismate: step 4/5.</text>
</comment>
<comment type="similarity">
    <text evidence="1">Belongs to the TrpC family.</text>
</comment>
<sequence>MTILSEIVKYKQSLLQNGYYQDKLNTLKSVKIQNKKSFINAIEKEPKLAIIAEIKSKSPTVNDLPERDLSQQISDYDQYGANAVSILTDEKYFSGSFERLQALTTKTTLPVLCKDFIIDPLQIDVAKQAGASMILLIVNILSDKQLKDLYNYAISQNLEVLVEVHDRHELERAYKVNAKLIGVNNRDLKRFVTNVEHTNTILENKKTNHYYISESGIHDASDVRKILHSGIDGLLIGEALMRCDNLSEFLPQLKMQKVKS</sequence>
<reference key="1">
    <citation type="journal article" date="1999" name="Microb. Drug Resist.">
        <title>Antibiotic resistance as a stress response: complete sequencing of a large number of chromosomal loci in Staphylococcus aureus strain COL that impact on the expression of resistance to methicillin.</title>
        <authorList>
            <person name="de Lencastre H."/>
            <person name="Wu S.-W."/>
            <person name="Pinho M.G."/>
            <person name="Ludovice A.M."/>
            <person name="Filipe S."/>
            <person name="Gardete S."/>
            <person name="Sobral R."/>
            <person name="Gill S.R."/>
            <person name="Chung M."/>
            <person name="Tomasz A."/>
        </authorList>
    </citation>
    <scope>NUCLEOTIDE SEQUENCE [GENOMIC DNA]</scope>
</reference>
<reference key="2">
    <citation type="journal article" date="2005" name="J. Bacteriol.">
        <title>Insights on evolution of virulence and resistance from the complete genome analysis of an early methicillin-resistant Staphylococcus aureus strain and a biofilm-producing methicillin-resistant Staphylococcus epidermidis strain.</title>
        <authorList>
            <person name="Gill S.R."/>
            <person name="Fouts D.E."/>
            <person name="Archer G.L."/>
            <person name="Mongodin E.F."/>
            <person name="DeBoy R.T."/>
            <person name="Ravel J."/>
            <person name="Paulsen I.T."/>
            <person name="Kolonay J.F."/>
            <person name="Brinkac L.M."/>
            <person name="Beanan M.J."/>
            <person name="Dodson R.J."/>
            <person name="Daugherty S.C."/>
            <person name="Madupu R."/>
            <person name="Angiuoli S.V."/>
            <person name="Durkin A.S."/>
            <person name="Haft D.H."/>
            <person name="Vamathevan J.J."/>
            <person name="Khouri H."/>
            <person name="Utterback T.R."/>
            <person name="Lee C."/>
            <person name="Dimitrov G."/>
            <person name="Jiang L."/>
            <person name="Qin H."/>
            <person name="Weidman J."/>
            <person name="Tran K."/>
            <person name="Kang K.H."/>
            <person name="Hance I.R."/>
            <person name="Nelson K.E."/>
            <person name="Fraser C.M."/>
        </authorList>
    </citation>
    <scope>NUCLEOTIDE SEQUENCE [LARGE SCALE GENOMIC DNA]</scope>
    <source>
        <strain>COL</strain>
    </source>
</reference>
<dbReference type="EC" id="4.1.1.48" evidence="1"/>
<dbReference type="EMBL" id="Y18640">
    <property type="protein sequence ID" value="CAB60751.1"/>
    <property type="molecule type" value="Genomic_DNA"/>
</dbReference>
<dbReference type="EMBL" id="CP000046">
    <property type="protein sequence ID" value="AAW36654.1"/>
    <property type="molecule type" value="Genomic_DNA"/>
</dbReference>
<dbReference type="RefSeq" id="WP_000154118.1">
    <property type="nucleotide sequence ID" value="NZ_JBGOFO010000003.1"/>
</dbReference>
<dbReference type="SMR" id="Q9RL78"/>
<dbReference type="KEGG" id="sac:SACOL1406"/>
<dbReference type="HOGENOM" id="CLU_034247_2_1_9"/>
<dbReference type="UniPathway" id="UPA00035">
    <property type="reaction ID" value="UER00043"/>
</dbReference>
<dbReference type="Proteomes" id="UP000000530">
    <property type="component" value="Chromosome"/>
</dbReference>
<dbReference type="GO" id="GO:0004425">
    <property type="term" value="F:indole-3-glycerol-phosphate synthase activity"/>
    <property type="evidence" value="ECO:0007669"/>
    <property type="project" value="UniProtKB-UniRule"/>
</dbReference>
<dbReference type="GO" id="GO:0004640">
    <property type="term" value="F:phosphoribosylanthranilate isomerase activity"/>
    <property type="evidence" value="ECO:0007669"/>
    <property type="project" value="TreeGrafter"/>
</dbReference>
<dbReference type="GO" id="GO:0000162">
    <property type="term" value="P:L-tryptophan biosynthetic process"/>
    <property type="evidence" value="ECO:0007669"/>
    <property type="project" value="UniProtKB-UniRule"/>
</dbReference>
<dbReference type="CDD" id="cd00331">
    <property type="entry name" value="IGPS"/>
    <property type="match status" value="1"/>
</dbReference>
<dbReference type="FunFam" id="3.20.20.70:FF:000212">
    <property type="entry name" value="Indole-3-glycerol phosphate synthase"/>
    <property type="match status" value="1"/>
</dbReference>
<dbReference type="Gene3D" id="3.20.20.70">
    <property type="entry name" value="Aldolase class I"/>
    <property type="match status" value="1"/>
</dbReference>
<dbReference type="HAMAP" id="MF_00134_B">
    <property type="entry name" value="IGPS_B"/>
    <property type="match status" value="1"/>
</dbReference>
<dbReference type="InterPro" id="IPR013785">
    <property type="entry name" value="Aldolase_TIM"/>
</dbReference>
<dbReference type="InterPro" id="IPR045186">
    <property type="entry name" value="Indole-3-glycerol_P_synth"/>
</dbReference>
<dbReference type="InterPro" id="IPR013798">
    <property type="entry name" value="Indole-3-glycerol_P_synth_dom"/>
</dbReference>
<dbReference type="InterPro" id="IPR001468">
    <property type="entry name" value="Indole-3-GlycerolPSynthase_CS"/>
</dbReference>
<dbReference type="InterPro" id="IPR011060">
    <property type="entry name" value="RibuloseP-bd_barrel"/>
</dbReference>
<dbReference type="NCBIfam" id="NF001371">
    <property type="entry name" value="PRK00278.1-3"/>
    <property type="match status" value="1"/>
</dbReference>
<dbReference type="PANTHER" id="PTHR22854:SF2">
    <property type="entry name" value="INDOLE-3-GLYCEROL-PHOSPHATE SYNTHASE"/>
    <property type="match status" value="1"/>
</dbReference>
<dbReference type="PANTHER" id="PTHR22854">
    <property type="entry name" value="TRYPTOPHAN BIOSYNTHESIS PROTEIN"/>
    <property type="match status" value="1"/>
</dbReference>
<dbReference type="Pfam" id="PF00218">
    <property type="entry name" value="IGPS"/>
    <property type="match status" value="1"/>
</dbReference>
<dbReference type="SUPFAM" id="SSF51366">
    <property type="entry name" value="Ribulose-phoshate binding barrel"/>
    <property type="match status" value="1"/>
</dbReference>
<dbReference type="PROSITE" id="PS00614">
    <property type="entry name" value="IGPS"/>
    <property type="match status" value="1"/>
</dbReference>
<feature type="chain" id="PRO_0000154249" description="Indole-3-glycerol phosphate synthase">
    <location>
        <begin position="1"/>
        <end position="260"/>
    </location>
</feature>
<proteinExistence type="inferred from homology"/>
<name>TRPC_STAAC</name>